<protein>
    <recommendedName>
        <fullName evidence="1">Large ribosomal subunit protein bL21</fullName>
    </recommendedName>
    <alternativeName>
        <fullName evidence="2">50S ribosomal protein L21</fullName>
    </alternativeName>
</protein>
<keyword id="KW-0687">Ribonucleoprotein</keyword>
<keyword id="KW-0689">Ribosomal protein</keyword>
<keyword id="KW-0694">RNA-binding</keyword>
<keyword id="KW-0699">rRNA-binding</keyword>
<reference key="1">
    <citation type="journal article" date="2004" name="Nat. Genet.">
        <title>Evidence in the Legionella pneumophila genome for exploitation of host cell functions and high genome plasticity.</title>
        <authorList>
            <person name="Cazalet C."/>
            <person name="Rusniok C."/>
            <person name="Brueggemann H."/>
            <person name="Zidane N."/>
            <person name="Magnier A."/>
            <person name="Ma L."/>
            <person name="Tichit M."/>
            <person name="Jarraud S."/>
            <person name="Bouchier C."/>
            <person name="Vandenesch F."/>
            <person name="Kunst F."/>
            <person name="Etienne J."/>
            <person name="Glaser P."/>
            <person name="Buchrieser C."/>
        </authorList>
    </citation>
    <scope>NUCLEOTIDE SEQUENCE [LARGE SCALE GENOMIC DNA]</scope>
    <source>
        <strain>Paris</strain>
    </source>
</reference>
<evidence type="ECO:0000255" key="1">
    <source>
        <dbReference type="HAMAP-Rule" id="MF_01363"/>
    </source>
</evidence>
<evidence type="ECO:0000305" key="2"/>
<sequence length="103" mass="11756">MYAVIKTGGKQYTVKEGDVLKIEMLPENVGNEIKFSEVLMLVDGDKVTCGTPFVAKATVKAEVLDHGRHKKVKIIKFRRRKHHMKQMGHRQYYSQVKITAIGK</sequence>
<feature type="chain" id="PRO_0000269335" description="Large ribosomal subunit protein bL21">
    <location>
        <begin position="1"/>
        <end position="103"/>
    </location>
</feature>
<proteinExistence type="inferred from homology"/>
<comment type="function">
    <text evidence="1">This protein binds to 23S rRNA in the presence of protein L20.</text>
</comment>
<comment type="subunit">
    <text evidence="1">Part of the 50S ribosomal subunit. Contacts protein L20.</text>
</comment>
<comment type="similarity">
    <text evidence="1">Belongs to the bacterial ribosomal protein bL21 family.</text>
</comment>
<accession>Q5X1N9</accession>
<name>RL21_LEGPA</name>
<organism>
    <name type="scientific">Legionella pneumophila (strain Paris)</name>
    <dbReference type="NCBI Taxonomy" id="297246"/>
    <lineage>
        <taxon>Bacteria</taxon>
        <taxon>Pseudomonadati</taxon>
        <taxon>Pseudomonadota</taxon>
        <taxon>Gammaproteobacteria</taxon>
        <taxon>Legionellales</taxon>
        <taxon>Legionellaceae</taxon>
        <taxon>Legionella</taxon>
    </lineage>
</organism>
<dbReference type="EMBL" id="CR628336">
    <property type="protein sequence ID" value="CAH13857.1"/>
    <property type="molecule type" value="Genomic_DNA"/>
</dbReference>
<dbReference type="RefSeq" id="WP_010948351.1">
    <property type="nucleotide sequence ID" value="NC_006368.1"/>
</dbReference>
<dbReference type="SMR" id="Q5X1N9"/>
<dbReference type="GeneID" id="57036650"/>
<dbReference type="KEGG" id="lpp:lpp2704"/>
<dbReference type="LegioList" id="lpp2704"/>
<dbReference type="HOGENOM" id="CLU_061463_3_3_6"/>
<dbReference type="GO" id="GO:0005737">
    <property type="term" value="C:cytoplasm"/>
    <property type="evidence" value="ECO:0007669"/>
    <property type="project" value="UniProtKB-ARBA"/>
</dbReference>
<dbReference type="GO" id="GO:1990904">
    <property type="term" value="C:ribonucleoprotein complex"/>
    <property type="evidence" value="ECO:0007669"/>
    <property type="project" value="UniProtKB-KW"/>
</dbReference>
<dbReference type="GO" id="GO:0005840">
    <property type="term" value="C:ribosome"/>
    <property type="evidence" value="ECO:0007669"/>
    <property type="project" value="UniProtKB-KW"/>
</dbReference>
<dbReference type="GO" id="GO:0019843">
    <property type="term" value="F:rRNA binding"/>
    <property type="evidence" value="ECO:0007669"/>
    <property type="project" value="UniProtKB-UniRule"/>
</dbReference>
<dbReference type="GO" id="GO:0003735">
    <property type="term" value="F:structural constituent of ribosome"/>
    <property type="evidence" value="ECO:0007669"/>
    <property type="project" value="InterPro"/>
</dbReference>
<dbReference type="GO" id="GO:0006412">
    <property type="term" value="P:translation"/>
    <property type="evidence" value="ECO:0007669"/>
    <property type="project" value="UniProtKB-UniRule"/>
</dbReference>
<dbReference type="HAMAP" id="MF_01363">
    <property type="entry name" value="Ribosomal_bL21"/>
    <property type="match status" value="1"/>
</dbReference>
<dbReference type="InterPro" id="IPR028909">
    <property type="entry name" value="bL21-like"/>
</dbReference>
<dbReference type="InterPro" id="IPR036164">
    <property type="entry name" value="bL21-like_sf"/>
</dbReference>
<dbReference type="InterPro" id="IPR001787">
    <property type="entry name" value="Ribosomal_bL21"/>
</dbReference>
<dbReference type="InterPro" id="IPR018258">
    <property type="entry name" value="Ribosomal_bL21_CS"/>
</dbReference>
<dbReference type="NCBIfam" id="TIGR00061">
    <property type="entry name" value="L21"/>
    <property type="match status" value="1"/>
</dbReference>
<dbReference type="PANTHER" id="PTHR21349">
    <property type="entry name" value="50S RIBOSOMAL PROTEIN L21"/>
    <property type="match status" value="1"/>
</dbReference>
<dbReference type="PANTHER" id="PTHR21349:SF0">
    <property type="entry name" value="LARGE RIBOSOMAL SUBUNIT PROTEIN BL21M"/>
    <property type="match status" value="1"/>
</dbReference>
<dbReference type="Pfam" id="PF00829">
    <property type="entry name" value="Ribosomal_L21p"/>
    <property type="match status" value="1"/>
</dbReference>
<dbReference type="SUPFAM" id="SSF141091">
    <property type="entry name" value="L21p-like"/>
    <property type="match status" value="1"/>
</dbReference>
<dbReference type="PROSITE" id="PS01169">
    <property type="entry name" value="RIBOSOMAL_L21"/>
    <property type="match status" value="1"/>
</dbReference>
<gene>
    <name evidence="1" type="primary">rplU</name>
    <name type="ordered locus">lpp2704</name>
</gene>